<keyword id="KW-1015">Disulfide bond</keyword>
<keyword id="KW-0872">Ion channel impairing toxin</keyword>
<keyword id="KW-0960">Knottin</keyword>
<keyword id="KW-0964">Secreted</keyword>
<keyword id="KW-0732">Signal</keyword>
<keyword id="KW-0800">Toxin</keyword>
<reference key="1">
    <citation type="journal article" date="2010" name="J. Proteome Res.">
        <title>Molecular diversification of peptide toxins from the tarantula Haplopelma hainanum (Ornithoctonus hainana) venom based on transcriptomic, peptidomic, and genomic analyses.</title>
        <authorList>
            <person name="Tang X."/>
            <person name="Zhang Y."/>
            <person name="Hu W."/>
            <person name="Xu D."/>
            <person name="Tao H."/>
            <person name="Yang X."/>
            <person name="Li Y."/>
            <person name="Jiang L."/>
            <person name="Liang S."/>
        </authorList>
    </citation>
    <scope>NUCLEOTIDE SEQUENCE [LARGE SCALE MRNA]</scope>
    <source>
        <tissue>Venom gland</tissue>
    </source>
</reference>
<proteinExistence type="evidence at transcript level"/>
<dbReference type="EMBL" id="GU292989">
    <property type="protein sequence ID" value="ADB56805.1"/>
    <property type="molecule type" value="mRNA"/>
</dbReference>
<dbReference type="SMR" id="D2Y2B2"/>
<dbReference type="ArachnoServer" id="AS001986">
    <property type="toxin name" value="U7-theraphotoxin-Hhn1a"/>
</dbReference>
<dbReference type="GO" id="GO:0005576">
    <property type="term" value="C:extracellular region"/>
    <property type="evidence" value="ECO:0007669"/>
    <property type="project" value="UniProtKB-SubCell"/>
</dbReference>
<dbReference type="GO" id="GO:0008200">
    <property type="term" value="F:ion channel inhibitor activity"/>
    <property type="evidence" value="ECO:0007669"/>
    <property type="project" value="InterPro"/>
</dbReference>
<dbReference type="GO" id="GO:0090729">
    <property type="term" value="F:toxin activity"/>
    <property type="evidence" value="ECO:0007669"/>
    <property type="project" value="UniProtKB-KW"/>
</dbReference>
<dbReference type="InterPro" id="IPR011696">
    <property type="entry name" value="Huwentoxin-1"/>
</dbReference>
<dbReference type="Pfam" id="PF07740">
    <property type="entry name" value="Toxin_12"/>
    <property type="match status" value="1"/>
</dbReference>
<dbReference type="SUPFAM" id="SSF57059">
    <property type="entry name" value="omega toxin-like"/>
    <property type="match status" value="1"/>
</dbReference>
<comment type="function">
    <text evidence="1">Ion channel inhibitor.</text>
</comment>
<comment type="subcellular location">
    <subcellularLocation>
        <location evidence="1">Secreted</location>
    </subcellularLocation>
</comment>
<comment type="tissue specificity">
    <text>Expressed by the venom gland.</text>
</comment>
<comment type="domain">
    <text evidence="1">The presence of a 'disulfide through disulfide knot' structurally defines this protein as a knottin.</text>
</comment>
<comment type="similarity">
    <text evidence="3">Belongs to the neurotoxin 10 (Hwtx-1) family. 13 (Hntx-13) subfamily.</text>
</comment>
<feature type="signal peptide" evidence="2">
    <location>
        <begin position="1"/>
        <end position="19"/>
    </location>
</feature>
<feature type="propeptide" id="PRO_0000400685" evidence="1">
    <location>
        <begin position="20"/>
        <end position="50"/>
    </location>
</feature>
<feature type="peptide" id="PRO_0000400686" description="U7-theraphotoxin-Hhn1a 4">
    <location>
        <begin position="51"/>
        <end position="90"/>
    </location>
</feature>
<feature type="disulfide bond" evidence="1">
    <location>
        <begin position="51"/>
        <end position="65"/>
    </location>
</feature>
<feature type="disulfide bond" evidence="1">
    <location>
        <begin position="58"/>
        <end position="70"/>
    </location>
</feature>
<feature type="disulfide bond" evidence="1">
    <location>
        <begin position="64"/>
        <end position="81"/>
    </location>
</feature>
<accession>D2Y2B2</accession>
<evidence type="ECO:0000250" key="1"/>
<evidence type="ECO:0000255" key="2"/>
<evidence type="ECO:0000305" key="3"/>
<sequence>MKTAIFTVVLALAVFAVLSFGWEANEEALSEEFTELIHEKEAASETEARECRYFWGECHDHMPCCDWLVCRYKWPITYNICVWNRTFPEK</sequence>
<name>H13A4_CYRHA</name>
<protein>
    <recommendedName>
        <fullName>U7-theraphotoxin-Hhn1a 4</fullName>
        <shortName>U7-TRTX-Hhn1a</shortName>
    </recommendedName>
    <alternativeName>
        <fullName>Hainantoxin-XIII.4</fullName>
        <shortName>HNTX-XIII.4</shortName>
    </alternativeName>
</protein>
<organism>
    <name type="scientific">Cyriopagopus hainanus</name>
    <name type="common">Chinese bird spider</name>
    <name type="synonym">Haplopelma hainanum</name>
    <dbReference type="NCBI Taxonomy" id="209901"/>
    <lineage>
        <taxon>Eukaryota</taxon>
        <taxon>Metazoa</taxon>
        <taxon>Ecdysozoa</taxon>
        <taxon>Arthropoda</taxon>
        <taxon>Chelicerata</taxon>
        <taxon>Arachnida</taxon>
        <taxon>Araneae</taxon>
        <taxon>Mygalomorphae</taxon>
        <taxon>Theraphosidae</taxon>
        <taxon>Haplopelma</taxon>
    </lineage>
</organism>